<gene>
    <name evidence="1" type="primary">tsf</name>
    <name type="ordered locus">DVU_0873</name>
</gene>
<keyword id="KW-0963">Cytoplasm</keyword>
<keyword id="KW-0251">Elongation factor</keyword>
<keyword id="KW-0648">Protein biosynthesis</keyword>
<keyword id="KW-1185">Reference proteome</keyword>
<dbReference type="EMBL" id="AE017285">
    <property type="protein sequence ID" value="AAS95353.1"/>
    <property type="molecule type" value="Genomic_DNA"/>
</dbReference>
<dbReference type="RefSeq" id="WP_010938172.1">
    <property type="nucleotide sequence ID" value="NC_002937.3"/>
</dbReference>
<dbReference type="RefSeq" id="YP_010094.1">
    <property type="nucleotide sequence ID" value="NC_002937.3"/>
</dbReference>
<dbReference type="SMR" id="Q72DQ6"/>
<dbReference type="IntAct" id="Q72DQ6">
    <property type="interactions" value="1"/>
</dbReference>
<dbReference type="STRING" id="882.DVU_0873"/>
<dbReference type="PaxDb" id="882-DVU_0873"/>
<dbReference type="EnsemblBacteria" id="AAS95353">
    <property type="protein sequence ID" value="AAS95353"/>
    <property type="gene ID" value="DVU_0873"/>
</dbReference>
<dbReference type="KEGG" id="dvu:DVU_0873"/>
<dbReference type="PATRIC" id="fig|882.5.peg.818"/>
<dbReference type="eggNOG" id="COG0264">
    <property type="taxonomic scope" value="Bacteria"/>
</dbReference>
<dbReference type="HOGENOM" id="CLU_047155_0_0_7"/>
<dbReference type="OrthoDB" id="9808348at2"/>
<dbReference type="PhylomeDB" id="Q72DQ6"/>
<dbReference type="Proteomes" id="UP000002194">
    <property type="component" value="Chromosome"/>
</dbReference>
<dbReference type="GO" id="GO:0005737">
    <property type="term" value="C:cytoplasm"/>
    <property type="evidence" value="ECO:0007669"/>
    <property type="project" value="UniProtKB-SubCell"/>
</dbReference>
<dbReference type="GO" id="GO:0003746">
    <property type="term" value="F:translation elongation factor activity"/>
    <property type="evidence" value="ECO:0007669"/>
    <property type="project" value="UniProtKB-UniRule"/>
</dbReference>
<dbReference type="CDD" id="cd14275">
    <property type="entry name" value="UBA_EF-Ts"/>
    <property type="match status" value="1"/>
</dbReference>
<dbReference type="FunFam" id="1.10.286.20:FF:000001">
    <property type="entry name" value="Elongation factor Ts"/>
    <property type="match status" value="1"/>
</dbReference>
<dbReference type="FunFam" id="1.10.8.10:FF:000001">
    <property type="entry name" value="Elongation factor Ts"/>
    <property type="match status" value="1"/>
</dbReference>
<dbReference type="Gene3D" id="1.10.286.20">
    <property type="match status" value="1"/>
</dbReference>
<dbReference type="Gene3D" id="1.10.8.10">
    <property type="entry name" value="DNA helicase RuvA subunit, C-terminal domain"/>
    <property type="match status" value="1"/>
</dbReference>
<dbReference type="Gene3D" id="3.30.479.20">
    <property type="entry name" value="Elongation factor Ts, dimerisation domain"/>
    <property type="match status" value="2"/>
</dbReference>
<dbReference type="HAMAP" id="MF_00050">
    <property type="entry name" value="EF_Ts"/>
    <property type="match status" value="1"/>
</dbReference>
<dbReference type="InterPro" id="IPR036402">
    <property type="entry name" value="EF-Ts_dimer_sf"/>
</dbReference>
<dbReference type="InterPro" id="IPR001816">
    <property type="entry name" value="Transl_elong_EFTs/EF1B"/>
</dbReference>
<dbReference type="InterPro" id="IPR014039">
    <property type="entry name" value="Transl_elong_EFTs/EF1B_dimer"/>
</dbReference>
<dbReference type="InterPro" id="IPR018101">
    <property type="entry name" value="Transl_elong_Ts_CS"/>
</dbReference>
<dbReference type="InterPro" id="IPR009060">
    <property type="entry name" value="UBA-like_sf"/>
</dbReference>
<dbReference type="NCBIfam" id="TIGR00116">
    <property type="entry name" value="tsf"/>
    <property type="match status" value="1"/>
</dbReference>
<dbReference type="PANTHER" id="PTHR11741">
    <property type="entry name" value="ELONGATION FACTOR TS"/>
    <property type="match status" value="1"/>
</dbReference>
<dbReference type="PANTHER" id="PTHR11741:SF0">
    <property type="entry name" value="ELONGATION FACTOR TS, MITOCHONDRIAL"/>
    <property type="match status" value="1"/>
</dbReference>
<dbReference type="Pfam" id="PF00889">
    <property type="entry name" value="EF_TS"/>
    <property type="match status" value="1"/>
</dbReference>
<dbReference type="SUPFAM" id="SSF54713">
    <property type="entry name" value="Elongation factor Ts (EF-Ts), dimerisation domain"/>
    <property type="match status" value="2"/>
</dbReference>
<dbReference type="SUPFAM" id="SSF46934">
    <property type="entry name" value="UBA-like"/>
    <property type="match status" value="1"/>
</dbReference>
<dbReference type="PROSITE" id="PS01126">
    <property type="entry name" value="EF_TS_1"/>
    <property type="match status" value="1"/>
</dbReference>
<dbReference type="PROSITE" id="PS01127">
    <property type="entry name" value="EF_TS_2"/>
    <property type="match status" value="1"/>
</dbReference>
<name>EFTS_NITV2</name>
<reference key="1">
    <citation type="journal article" date="2004" name="Nat. Biotechnol.">
        <title>The genome sequence of the anaerobic, sulfate-reducing bacterium Desulfovibrio vulgaris Hildenborough.</title>
        <authorList>
            <person name="Heidelberg J.F."/>
            <person name="Seshadri R."/>
            <person name="Haveman S.A."/>
            <person name="Hemme C.L."/>
            <person name="Paulsen I.T."/>
            <person name="Kolonay J.F."/>
            <person name="Eisen J.A."/>
            <person name="Ward N.L."/>
            <person name="Methe B.A."/>
            <person name="Brinkac L.M."/>
            <person name="Daugherty S.C."/>
            <person name="DeBoy R.T."/>
            <person name="Dodson R.J."/>
            <person name="Durkin A.S."/>
            <person name="Madupu R."/>
            <person name="Nelson W.C."/>
            <person name="Sullivan S.A."/>
            <person name="Fouts D.E."/>
            <person name="Haft D.H."/>
            <person name="Selengut J."/>
            <person name="Peterson J.D."/>
            <person name="Davidsen T.M."/>
            <person name="Zafar N."/>
            <person name="Zhou L."/>
            <person name="Radune D."/>
            <person name="Dimitrov G."/>
            <person name="Hance M."/>
            <person name="Tran K."/>
            <person name="Khouri H.M."/>
            <person name="Gill J."/>
            <person name="Utterback T.R."/>
            <person name="Feldblyum T.V."/>
            <person name="Wall J.D."/>
            <person name="Voordouw G."/>
            <person name="Fraser C.M."/>
        </authorList>
    </citation>
    <scope>NUCLEOTIDE SEQUENCE [LARGE SCALE GENOMIC DNA]</scope>
    <source>
        <strain>ATCC 29579 / DSM 644 / CCUG 34227 / NCIMB 8303 / VKM B-1760 / Hildenborough</strain>
    </source>
</reference>
<organism>
    <name type="scientific">Nitratidesulfovibrio vulgaris (strain ATCC 29579 / DSM 644 / CCUG 34227 / NCIMB 8303 / VKM B-1760 / Hildenborough)</name>
    <name type="common">Desulfovibrio vulgaris</name>
    <dbReference type="NCBI Taxonomy" id="882"/>
    <lineage>
        <taxon>Bacteria</taxon>
        <taxon>Pseudomonadati</taxon>
        <taxon>Thermodesulfobacteriota</taxon>
        <taxon>Desulfovibrionia</taxon>
        <taxon>Desulfovibrionales</taxon>
        <taxon>Desulfovibrionaceae</taxon>
        <taxon>Nitratidesulfovibrio</taxon>
    </lineage>
</organism>
<evidence type="ECO:0000255" key="1">
    <source>
        <dbReference type="HAMAP-Rule" id="MF_00050"/>
    </source>
</evidence>
<sequence length="287" mass="30523">MAITASMVKELREKTSAGMMDCKKALEECGGEMDKAVDWLRQKGLSKAAKKAGRATSEGLVGCFVSADGKTAGLAELKCETDFVSRNEKFVELAGKLAEQVATKGALDESAQTAINDIIATLGENMGSGRTAQMNVAGEGFIGSYLHSNGKIAVLVEMTCEKAATAAEATFLECAKNVAMQIAASNPAAVSADKVDPALIAREREVYRQKALEEGKPENIVEKIAEGAVKKFFKEACLLEQPYIRDDKTTVAELLKQTSKAVGDNLGVARFVRFQLGEDAAAEEAAE</sequence>
<accession>Q72DQ6</accession>
<proteinExistence type="inferred from homology"/>
<feature type="chain" id="PRO_0000161116" description="Elongation factor Ts">
    <location>
        <begin position="1"/>
        <end position="287"/>
    </location>
</feature>
<feature type="region of interest" description="Involved in Mg(2+) ion dislocation from EF-Tu" evidence="1">
    <location>
        <begin position="81"/>
        <end position="84"/>
    </location>
</feature>
<comment type="function">
    <text evidence="1">Associates with the EF-Tu.GDP complex and induces the exchange of GDP to GTP. It remains bound to the aminoacyl-tRNA.EF-Tu.GTP complex up to the GTP hydrolysis stage on the ribosome.</text>
</comment>
<comment type="subcellular location">
    <subcellularLocation>
        <location evidence="1">Cytoplasm</location>
    </subcellularLocation>
</comment>
<comment type="similarity">
    <text evidence="1">Belongs to the EF-Ts family.</text>
</comment>
<protein>
    <recommendedName>
        <fullName evidence="1">Elongation factor Ts</fullName>
        <shortName evidence="1">EF-Ts</shortName>
    </recommendedName>
</protein>